<organism>
    <name type="scientific">Rickettsia rickettsii (strain Iowa)</name>
    <dbReference type="NCBI Taxonomy" id="452659"/>
    <lineage>
        <taxon>Bacteria</taxon>
        <taxon>Pseudomonadati</taxon>
        <taxon>Pseudomonadota</taxon>
        <taxon>Alphaproteobacteria</taxon>
        <taxon>Rickettsiales</taxon>
        <taxon>Rickettsiaceae</taxon>
        <taxon>Rickettsieae</taxon>
        <taxon>Rickettsia</taxon>
        <taxon>spotted fever group</taxon>
    </lineage>
</organism>
<gene>
    <name evidence="1" type="primary">yciB</name>
    <name type="ordered locus">RrIowa_0644</name>
</gene>
<proteinExistence type="inferred from homology"/>
<sequence length="180" mass="20418">MLKFLSEIGPVIAFFAGFFYGGGIQHATLYMLITSVICITLCYVIDKKVSKLSIISTTVLLVSGSITLISGDSMYIKIKPTILYVIFGIIFLMSGIRKNPFIKYALESIVRLKEESWITLSYRTAAFFFFMAVVNEVVWRNCSDETWVKFKVFGVIPITFIFILLQLPLLLKNKLPDSKI</sequence>
<evidence type="ECO:0000255" key="1">
    <source>
        <dbReference type="HAMAP-Rule" id="MF_00189"/>
    </source>
</evidence>
<dbReference type="EMBL" id="CP000766">
    <property type="protein sequence ID" value="ABY72508.1"/>
    <property type="molecule type" value="Genomic_DNA"/>
</dbReference>
<dbReference type="RefSeq" id="WP_012150739.1">
    <property type="nucleotide sequence ID" value="NC_010263.3"/>
</dbReference>
<dbReference type="SMR" id="B0BXD2"/>
<dbReference type="KEGG" id="rrj:RrIowa_0644"/>
<dbReference type="eggNOG" id="COG2917">
    <property type="taxonomic scope" value="Bacteria"/>
</dbReference>
<dbReference type="HOGENOM" id="CLU_089554_1_1_5"/>
<dbReference type="Proteomes" id="UP000000796">
    <property type="component" value="Chromosome"/>
</dbReference>
<dbReference type="GO" id="GO:0005886">
    <property type="term" value="C:plasma membrane"/>
    <property type="evidence" value="ECO:0007669"/>
    <property type="project" value="UniProtKB-SubCell"/>
</dbReference>
<dbReference type="HAMAP" id="MF_00189">
    <property type="entry name" value="YciB"/>
    <property type="match status" value="1"/>
</dbReference>
<dbReference type="InterPro" id="IPR006008">
    <property type="entry name" value="YciB"/>
</dbReference>
<dbReference type="NCBIfam" id="TIGR00997">
    <property type="entry name" value="ispZ"/>
    <property type="match status" value="1"/>
</dbReference>
<dbReference type="NCBIfam" id="NF001323">
    <property type="entry name" value="PRK00259.1-1"/>
    <property type="match status" value="1"/>
</dbReference>
<dbReference type="PANTHER" id="PTHR36917:SF1">
    <property type="entry name" value="INNER MEMBRANE-SPANNING PROTEIN YCIB"/>
    <property type="match status" value="1"/>
</dbReference>
<dbReference type="PANTHER" id="PTHR36917">
    <property type="entry name" value="INTRACELLULAR SEPTATION PROTEIN A-RELATED"/>
    <property type="match status" value="1"/>
</dbReference>
<dbReference type="Pfam" id="PF04279">
    <property type="entry name" value="IspA"/>
    <property type="match status" value="1"/>
</dbReference>
<comment type="function">
    <text evidence="1">Plays a role in cell envelope biogenesis, maintenance of cell envelope integrity and membrane homeostasis.</text>
</comment>
<comment type="subcellular location">
    <subcellularLocation>
        <location evidence="1">Cell inner membrane</location>
        <topology evidence="1">Multi-pass membrane protein</topology>
    </subcellularLocation>
</comment>
<comment type="similarity">
    <text evidence="1">Belongs to the YciB family.</text>
</comment>
<name>YCIB_RICRO</name>
<feature type="chain" id="PRO_1000077491" description="Inner membrane-spanning protein YciB">
    <location>
        <begin position="1"/>
        <end position="180"/>
    </location>
</feature>
<feature type="transmembrane region" description="Helical" evidence="1">
    <location>
        <begin position="4"/>
        <end position="24"/>
    </location>
</feature>
<feature type="transmembrane region" description="Helical" evidence="1">
    <location>
        <begin position="25"/>
        <end position="45"/>
    </location>
</feature>
<feature type="transmembrane region" description="Helical" evidence="1">
    <location>
        <begin position="49"/>
        <end position="69"/>
    </location>
</feature>
<feature type="transmembrane region" description="Helical" evidence="1">
    <location>
        <begin position="76"/>
        <end position="96"/>
    </location>
</feature>
<feature type="transmembrane region" description="Helical" evidence="1">
    <location>
        <begin position="118"/>
        <end position="138"/>
    </location>
</feature>
<feature type="transmembrane region" description="Helical" evidence="1">
    <location>
        <begin position="150"/>
        <end position="170"/>
    </location>
</feature>
<keyword id="KW-0997">Cell inner membrane</keyword>
<keyword id="KW-1003">Cell membrane</keyword>
<keyword id="KW-0472">Membrane</keyword>
<keyword id="KW-0812">Transmembrane</keyword>
<keyword id="KW-1133">Transmembrane helix</keyword>
<protein>
    <recommendedName>
        <fullName evidence="1">Inner membrane-spanning protein YciB</fullName>
    </recommendedName>
</protein>
<accession>B0BXD2</accession>
<reference key="1">
    <citation type="journal article" date="2008" name="Infect. Immun.">
        <title>Genomic comparison of virulent Rickettsia rickettsii Sheila Smith and avirulent Rickettsia rickettsii Iowa.</title>
        <authorList>
            <person name="Ellison D.W."/>
            <person name="Clark T.R."/>
            <person name="Sturdevant D.E."/>
            <person name="Virtaneva K."/>
            <person name="Porcella S.F."/>
            <person name="Hackstadt T."/>
        </authorList>
    </citation>
    <scope>NUCLEOTIDE SEQUENCE [LARGE SCALE GENOMIC DNA]</scope>
    <source>
        <strain>Iowa</strain>
    </source>
</reference>